<feature type="chain" id="PRO_0000382601" description="Cytosolic Fe-S cluster assembly factor Nubp1 homolog">
    <location>
        <begin position="1"/>
        <end position="310"/>
    </location>
</feature>
<feature type="binding site" evidence="2">
    <location>
        <position position="8"/>
    </location>
    <ligand>
        <name>[4Fe-4S] cluster</name>
        <dbReference type="ChEBI" id="CHEBI:49883"/>
        <label>1</label>
    </ligand>
</feature>
<feature type="binding site" evidence="2">
    <location>
        <position position="22"/>
    </location>
    <ligand>
        <name>[4Fe-4S] cluster</name>
        <dbReference type="ChEBI" id="CHEBI:49883"/>
        <label>1</label>
    </ligand>
</feature>
<feature type="binding site" evidence="2">
    <location>
        <position position="25"/>
    </location>
    <ligand>
        <name>[4Fe-4S] cluster</name>
        <dbReference type="ChEBI" id="CHEBI:49883"/>
        <label>1</label>
    </ligand>
</feature>
<feature type="binding site" evidence="2">
    <location>
        <position position="31"/>
    </location>
    <ligand>
        <name>[4Fe-4S] cluster</name>
        <dbReference type="ChEBI" id="CHEBI:49883"/>
        <label>1</label>
    </ligand>
</feature>
<feature type="binding site" evidence="2">
    <location>
        <begin position="62"/>
        <end position="69"/>
    </location>
    <ligand>
        <name>ATP</name>
        <dbReference type="ChEBI" id="CHEBI:30616"/>
    </ligand>
</feature>
<feature type="binding site" evidence="2">
    <location>
        <position position="239"/>
    </location>
    <ligand>
        <name>[4Fe-4S] cluster</name>
        <dbReference type="ChEBI" id="CHEBI:49883"/>
        <label>2</label>
        <note>ligand shared with heterodimeric partner</note>
    </ligand>
</feature>
<feature type="binding site" evidence="2">
    <location>
        <position position="242"/>
    </location>
    <ligand>
        <name>[4Fe-4S] cluster</name>
        <dbReference type="ChEBI" id="CHEBI:49883"/>
        <label>2</label>
        <note>ligand shared with heterodimeric partner</note>
    </ligand>
</feature>
<proteinExistence type="inferred from homology"/>
<evidence type="ECO:0000250" key="1">
    <source>
        <dbReference type="UniProtKB" id="Q9VJI9"/>
    </source>
</evidence>
<evidence type="ECO:0000255" key="2">
    <source>
        <dbReference type="HAMAP-Rule" id="MF_03038"/>
    </source>
</evidence>
<dbReference type="EMBL" id="CH902624">
    <property type="protein sequence ID" value="EDV33421.1"/>
    <property type="molecule type" value="Genomic_DNA"/>
</dbReference>
<dbReference type="SMR" id="B3MU92"/>
<dbReference type="FunCoup" id="B3MU92">
    <property type="interactions" value="813"/>
</dbReference>
<dbReference type="STRING" id="7217.B3MU92"/>
<dbReference type="EnsemblMetazoa" id="FBtr0125575">
    <property type="protein sequence ID" value="FBpp0124067"/>
    <property type="gene ID" value="FBgn0097881"/>
</dbReference>
<dbReference type="EnsemblMetazoa" id="XM_001965251.4">
    <property type="protein sequence ID" value="XP_001965287.1"/>
    <property type="gene ID" value="LOC6503567"/>
</dbReference>
<dbReference type="GeneID" id="6503567"/>
<dbReference type="KEGG" id="dan:6503567"/>
<dbReference type="CTD" id="4682"/>
<dbReference type="eggNOG" id="KOG3022">
    <property type="taxonomic scope" value="Eukaryota"/>
</dbReference>
<dbReference type="HOGENOM" id="CLU_024839_0_1_1"/>
<dbReference type="InParanoid" id="B3MU92"/>
<dbReference type="OMA" id="VSGCPMR"/>
<dbReference type="OrthoDB" id="1741334at2759"/>
<dbReference type="PhylomeDB" id="B3MU92"/>
<dbReference type="Proteomes" id="UP000007801">
    <property type="component" value="Unassembled WGS sequence"/>
</dbReference>
<dbReference type="GO" id="GO:0005829">
    <property type="term" value="C:cytosol"/>
    <property type="evidence" value="ECO:0000250"/>
    <property type="project" value="UniProtKB"/>
</dbReference>
<dbReference type="GO" id="GO:0051539">
    <property type="term" value="F:4 iron, 4 sulfur cluster binding"/>
    <property type="evidence" value="ECO:0007669"/>
    <property type="project" value="UniProtKB-UniRule"/>
</dbReference>
<dbReference type="GO" id="GO:0005524">
    <property type="term" value="F:ATP binding"/>
    <property type="evidence" value="ECO:0007669"/>
    <property type="project" value="UniProtKB-KW"/>
</dbReference>
<dbReference type="GO" id="GO:0140663">
    <property type="term" value="F:ATP-dependent FeS chaperone activity"/>
    <property type="evidence" value="ECO:0007669"/>
    <property type="project" value="InterPro"/>
</dbReference>
<dbReference type="GO" id="GO:0051536">
    <property type="term" value="F:iron-sulfur cluster binding"/>
    <property type="evidence" value="ECO:0000250"/>
    <property type="project" value="UniProtKB"/>
</dbReference>
<dbReference type="GO" id="GO:0046872">
    <property type="term" value="F:metal ion binding"/>
    <property type="evidence" value="ECO:0007669"/>
    <property type="project" value="UniProtKB-KW"/>
</dbReference>
<dbReference type="GO" id="GO:0016226">
    <property type="term" value="P:iron-sulfur cluster assembly"/>
    <property type="evidence" value="ECO:0000250"/>
    <property type="project" value="UniProtKB"/>
</dbReference>
<dbReference type="CDD" id="cd02037">
    <property type="entry name" value="Mrp_NBP35"/>
    <property type="match status" value="1"/>
</dbReference>
<dbReference type="FunFam" id="3.40.50.300:FF:001759">
    <property type="entry name" value="Cytosolic Fe-S cluster assembly factor NUBP1 homolog"/>
    <property type="match status" value="1"/>
</dbReference>
<dbReference type="Gene3D" id="3.40.50.300">
    <property type="entry name" value="P-loop containing nucleotide triphosphate hydrolases"/>
    <property type="match status" value="1"/>
</dbReference>
<dbReference type="HAMAP" id="MF_02040">
    <property type="entry name" value="Mrp_NBP35"/>
    <property type="match status" value="1"/>
</dbReference>
<dbReference type="HAMAP" id="MF_03038">
    <property type="entry name" value="NUBP1"/>
    <property type="match status" value="1"/>
</dbReference>
<dbReference type="InterPro" id="IPR019591">
    <property type="entry name" value="Mrp/NBP35_ATP-bd"/>
</dbReference>
<dbReference type="InterPro" id="IPR028601">
    <property type="entry name" value="NUBP1/Nbp35"/>
</dbReference>
<dbReference type="InterPro" id="IPR027417">
    <property type="entry name" value="P-loop_NTPase"/>
</dbReference>
<dbReference type="InterPro" id="IPR033756">
    <property type="entry name" value="YlxH/NBP35"/>
</dbReference>
<dbReference type="PANTHER" id="PTHR23264:SF35">
    <property type="entry name" value="CYTOSOLIC FE-S CLUSTER ASSEMBLY FACTOR NUBP1"/>
    <property type="match status" value="1"/>
</dbReference>
<dbReference type="PANTHER" id="PTHR23264">
    <property type="entry name" value="NUCLEOTIDE-BINDING PROTEIN NBP35 YEAST -RELATED"/>
    <property type="match status" value="1"/>
</dbReference>
<dbReference type="Pfam" id="PF10609">
    <property type="entry name" value="ParA"/>
    <property type="match status" value="1"/>
</dbReference>
<dbReference type="SUPFAM" id="SSF52540">
    <property type="entry name" value="P-loop containing nucleoside triphosphate hydrolases"/>
    <property type="match status" value="1"/>
</dbReference>
<reference key="1">
    <citation type="journal article" date="2007" name="Nature">
        <title>Evolution of genes and genomes on the Drosophila phylogeny.</title>
        <authorList>
            <consortium name="Drosophila 12 genomes consortium"/>
        </authorList>
    </citation>
    <scope>NUCLEOTIDE SEQUENCE [LARGE SCALE GENOMIC DNA]</scope>
    <source>
        <strain>Tucson 14024-0371.13</strain>
    </source>
</reference>
<organism>
    <name type="scientific">Drosophila ananassae</name>
    <name type="common">Fruit fly</name>
    <dbReference type="NCBI Taxonomy" id="7217"/>
    <lineage>
        <taxon>Eukaryota</taxon>
        <taxon>Metazoa</taxon>
        <taxon>Ecdysozoa</taxon>
        <taxon>Arthropoda</taxon>
        <taxon>Hexapoda</taxon>
        <taxon>Insecta</taxon>
        <taxon>Pterygota</taxon>
        <taxon>Neoptera</taxon>
        <taxon>Endopterygota</taxon>
        <taxon>Diptera</taxon>
        <taxon>Brachycera</taxon>
        <taxon>Muscomorpha</taxon>
        <taxon>Ephydroidea</taxon>
        <taxon>Drosophilidae</taxon>
        <taxon>Drosophila</taxon>
        <taxon>Sophophora</taxon>
    </lineage>
</organism>
<name>NUBP1_DROAN</name>
<comment type="function">
    <text evidence="2">Component of the cytosolic iron-sulfur (Fe/S) protein assembly (CIA) machinery. Required for maturation of extramitochondrial Fe-S proteins. The Nubp1-Nubp2 heterotetramer forms a Fe-S scaffold complex, mediating the de novo assembly of an Fe-S cluster and its transfer to target apoproteins.</text>
</comment>
<comment type="cofactor">
    <cofactor evidence="2">
        <name>[4Fe-4S] cluster</name>
        <dbReference type="ChEBI" id="CHEBI:49883"/>
    </cofactor>
    <text evidence="2">Binds 4 [4Fe-4S] clusters per heterotetramer. Contains two stable clusters in the N-termini of Nubp1 and two labile, bridging clusters between subunits of the Nubp1-Nubp2 heterotetramer.</text>
</comment>
<comment type="subunit">
    <text evidence="2">Heterotetramer of 2 Nubp1 and 2 Nubp2 chains.</text>
</comment>
<comment type="subcellular location">
    <subcellularLocation>
        <location evidence="2">Cytoplasm</location>
    </subcellularLocation>
</comment>
<comment type="similarity">
    <text evidence="2">Belongs to the Mrp/NBP35 ATP-binding proteins family. NUBP1/NBP35 subfamily.</text>
</comment>
<keyword id="KW-0004">4Fe-4S</keyword>
<keyword id="KW-0067">ATP-binding</keyword>
<keyword id="KW-0963">Cytoplasm</keyword>
<keyword id="KW-0408">Iron</keyword>
<keyword id="KW-0411">Iron-sulfur</keyword>
<keyword id="KW-0479">Metal-binding</keyword>
<keyword id="KW-0547">Nucleotide-binding</keyword>
<keyword id="KW-1185">Reference proteome</keyword>
<gene>
    <name evidence="1" type="primary">Nubp1</name>
    <name type="ORF">GF20875</name>
</gene>
<protein>
    <recommendedName>
        <fullName evidence="2">Cytosolic Fe-S cluster assembly factor Nubp1 homolog</fullName>
    </recommendedName>
</protein>
<sequence length="310" mass="32791">MEAPPEHCPGVESEQAGKVSACAGCPNQGICSDPNRKVEDPGKALVAESLKDVKNKLLILSGKGGVGKSTVTSLLTRYLARSCPNSNFGVLDIDICGPSQPRLLGALGENVHQSGSGWSPVGIDDNVCLMSIGFLLGSVDDAIIWRGPKKNGMIRQFLSEVDWGNLDLLLLDTPPGTSDEHLSVVSYLKDDTQPESLRAVIVTTPQEVALLDVRKEINFCKKQNIPIVGVIENMSSFRCGNCGNSSEIFPAKTGGAAAMCAEMEVPLLGSLPLDPQIAKACDSGDDITEIKNSTTEALDGICSKIMSSFS</sequence>
<accession>B3MU92</accession>